<gene>
    <name evidence="1" type="primary">rplL</name>
    <name type="ordered locus">LBUL_1536</name>
</gene>
<proteinExistence type="inferred from homology"/>
<accession>Q048U5</accession>
<sequence>MALDTANIIEQLKGASILELNDLVHAIEEEFGVTAAAPVAAAGAAGGAEEAKSSFDVELTSAGTEKVKVIKIVKEATGASLLDAKKTVDGAPVVLKEGLSEDEANELKAKLEEVGATVTLK</sequence>
<reference key="1">
    <citation type="journal article" date="2006" name="Proc. Natl. Acad. Sci. U.S.A.">
        <title>Comparative genomics of the lactic acid bacteria.</title>
        <authorList>
            <person name="Makarova K.S."/>
            <person name="Slesarev A."/>
            <person name="Wolf Y.I."/>
            <person name="Sorokin A."/>
            <person name="Mirkin B."/>
            <person name="Koonin E.V."/>
            <person name="Pavlov A."/>
            <person name="Pavlova N."/>
            <person name="Karamychev V."/>
            <person name="Polouchine N."/>
            <person name="Shakhova V."/>
            <person name="Grigoriev I."/>
            <person name="Lou Y."/>
            <person name="Rohksar D."/>
            <person name="Lucas S."/>
            <person name="Huang K."/>
            <person name="Goodstein D.M."/>
            <person name="Hawkins T."/>
            <person name="Plengvidhya V."/>
            <person name="Welker D."/>
            <person name="Hughes J."/>
            <person name="Goh Y."/>
            <person name="Benson A."/>
            <person name="Baldwin K."/>
            <person name="Lee J.-H."/>
            <person name="Diaz-Muniz I."/>
            <person name="Dosti B."/>
            <person name="Smeianov V."/>
            <person name="Wechter W."/>
            <person name="Barabote R."/>
            <person name="Lorca G."/>
            <person name="Altermann E."/>
            <person name="Barrangou R."/>
            <person name="Ganesan B."/>
            <person name="Xie Y."/>
            <person name="Rawsthorne H."/>
            <person name="Tamir D."/>
            <person name="Parker C."/>
            <person name="Breidt F."/>
            <person name="Broadbent J.R."/>
            <person name="Hutkins R."/>
            <person name="O'Sullivan D."/>
            <person name="Steele J."/>
            <person name="Unlu G."/>
            <person name="Saier M.H. Jr."/>
            <person name="Klaenhammer T."/>
            <person name="Richardson P."/>
            <person name="Kozyavkin S."/>
            <person name="Weimer B.C."/>
            <person name="Mills D.A."/>
        </authorList>
    </citation>
    <scope>NUCLEOTIDE SEQUENCE [LARGE SCALE GENOMIC DNA]</scope>
    <source>
        <strain>ATCC BAA-365 / Lb-18</strain>
    </source>
</reference>
<dbReference type="EMBL" id="CP000412">
    <property type="protein sequence ID" value="ABJ59027.1"/>
    <property type="molecule type" value="Genomic_DNA"/>
</dbReference>
<dbReference type="RefSeq" id="WP_003621928.1">
    <property type="nucleotide sequence ID" value="NC_008529.1"/>
</dbReference>
<dbReference type="SMR" id="Q048U5"/>
<dbReference type="KEGG" id="lbu:LBUL_1536"/>
<dbReference type="HOGENOM" id="CLU_086499_3_2_9"/>
<dbReference type="BioCyc" id="LDEL321956:LBUL_RS07235-MONOMER"/>
<dbReference type="GO" id="GO:0022625">
    <property type="term" value="C:cytosolic large ribosomal subunit"/>
    <property type="evidence" value="ECO:0007669"/>
    <property type="project" value="TreeGrafter"/>
</dbReference>
<dbReference type="GO" id="GO:0003729">
    <property type="term" value="F:mRNA binding"/>
    <property type="evidence" value="ECO:0007669"/>
    <property type="project" value="TreeGrafter"/>
</dbReference>
<dbReference type="GO" id="GO:0003735">
    <property type="term" value="F:structural constituent of ribosome"/>
    <property type="evidence" value="ECO:0007669"/>
    <property type="project" value="InterPro"/>
</dbReference>
<dbReference type="GO" id="GO:0006412">
    <property type="term" value="P:translation"/>
    <property type="evidence" value="ECO:0007669"/>
    <property type="project" value="UniProtKB-UniRule"/>
</dbReference>
<dbReference type="FunFam" id="3.30.1390.10:FF:000001">
    <property type="entry name" value="50S ribosomal protein L7/L12"/>
    <property type="match status" value="1"/>
</dbReference>
<dbReference type="Gene3D" id="3.30.1390.10">
    <property type="match status" value="1"/>
</dbReference>
<dbReference type="Gene3D" id="1.20.5.710">
    <property type="entry name" value="Single helix bin"/>
    <property type="match status" value="1"/>
</dbReference>
<dbReference type="HAMAP" id="MF_00368">
    <property type="entry name" value="Ribosomal_bL12"/>
    <property type="match status" value="1"/>
</dbReference>
<dbReference type="InterPro" id="IPR000206">
    <property type="entry name" value="Ribosomal_bL12"/>
</dbReference>
<dbReference type="InterPro" id="IPR013823">
    <property type="entry name" value="Ribosomal_bL12_C"/>
</dbReference>
<dbReference type="InterPro" id="IPR014719">
    <property type="entry name" value="Ribosomal_bL12_C/ClpS-like"/>
</dbReference>
<dbReference type="InterPro" id="IPR008932">
    <property type="entry name" value="Ribosomal_bL12_oligo"/>
</dbReference>
<dbReference type="InterPro" id="IPR036235">
    <property type="entry name" value="Ribosomal_bL12_oligo_N_sf"/>
</dbReference>
<dbReference type="NCBIfam" id="TIGR00855">
    <property type="entry name" value="L12"/>
    <property type="match status" value="1"/>
</dbReference>
<dbReference type="PANTHER" id="PTHR45987">
    <property type="entry name" value="39S RIBOSOMAL PROTEIN L12"/>
    <property type="match status" value="1"/>
</dbReference>
<dbReference type="PANTHER" id="PTHR45987:SF4">
    <property type="entry name" value="LARGE RIBOSOMAL SUBUNIT PROTEIN BL12M"/>
    <property type="match status" value="1"/>
</dbReference>
<dbReference type="Pfam" id="PF00542">
    <property type="entry name" value="Ribosomal_L12"/>
    <property type="match status" value="1"/>
</dbReference>
<dbReference type="Pfam" id="PF16320">
    <property type="entry name" value="Ribosomal_L12_N"/>
    <property type="match status" value="1"/>
</dbReference>
<dbReference type="SUPFAM" id="SSF54736">
    <property type="entry name" value="ClpS-like"/>
    <property type="match status" value="1"/>
</dbReference>
<dbReference type="SUPFAM" id="SSF48300">
    <property type="entry name" value="Ribosomal protein L7/12, oligomerisation (N-terminal) domain"/>
    <property type="match status" value="1"/>
</dbReference>
<feature type="chain" id="PRO_1000007028" description="Large ribosomal subunit protein bL12">
    <location>
        <begin position="1"/>
        <end position="121"/>
    </location>
</feature>
<protein>
    <recommendedName>
        <fullName evidence="1">Large ribosomal subunit protein bL12</fullName>
    </recommendedName>
    <alternativeName>
        <fullName evidence="2">50S ribosomal protein L7/L12</fullName>
    </alternativeName>
</protein>
<name>RL7_LACDB</name>
<comment type="function">
    <text evidence="1">Forms part of the ribosomal stalk which helps the ribosome interact with GTP-bound translation factors. Is thus essential for accurate translation.</text>
</comment>
<comment type="subunit">
    <text evidence="1">Homodimer. Part of the ribosomal stalk of the 50S ribosomal subunit. Forms a multimeric L10(L12)X complex, where L10 forms an elongated spine to which 2 to 4 L12 dimers bind in a sequential fashion. Binds GTP-bound translation factors.</text>
</comment>
<comment type="similarity">
    <text evidence="1">Belongs to the bacterial ribosomal protein bL12 family.</text>
</comment>
<evidence type="ECO:0000255" key="1">
    <source>
        <dbReference type="HAMAP-Rule" id="MF_00368"/>
    </source>
</evidence>
<evidence type="ECO:0000305" key="2"/>
<keyword id="KW-0687">Ribonucleoprotein</keyword>
<keyword id="KW-0689">Ribosomal protein</keyword>
<organism>
    <name type="scientific">Lactobacillus delbrueckii subsp. bulgaricus (strain ATCC BAA-365 / Lb-18)</name>
    <dbReference type="NCBI Taxonomy" id="321956"/>
    <lineage>
        <taxon>Bacteria</taxon>
        <taxon>Bacillati</taxon>
        <taxon>Bacillota</taxon>
        <taxon>Bacilli</taxon>
        <taxon>Lactobacillales</taxon>
        <taxon>Lactobacillaceae</taxon>
        <taxon>Lactobacillus</taxon>
    </lineage>
</organism>